<protein>
    <recommendedName>
        <fullName evidence="1">Large ribosomal subunit protein bL21</fullName>
    </recommendedName>
    <alternativeName>
        <fullName evidence="2">50S ribosomal protein L21</fullName>
    </alternativeName>
</protein>
<sequence>MYALIEYKGKQYKVERGSSIVVDNISEVAPGGCIDVREVLMIGGEGLTRIGSPYLEGVGVRAVVGECFRSRKITVYKYKSKKDYHRTIGHRQWYTRLTVSDILGV</sequence>
<proteinExistence type="inferred from homology"/>
<reference key="1">
    <citation type="journal article" date="2008" name="BMC Microbiol.">
        <title>Complete genome sequence of Treponema pallidum ssp. pallidum strain SS14 determined with oligonucleotide arrays.</title>
        <authorList>
            <person name="Matejkova P."/>
            <person name="Strouhal M."/>
            <person name="Smajs D."/>
            <person name="Norris S.J."/>
            <person name="Palzkill T."/>
            <person name="Petrosino J.F."/>
            <person name="Sodergren E."/>
            <person name="Norton J.E."/>
            <person name="Singh J."/>
            <person name="Richmond T.A."/>
            <person name="Molla M.N."/>
            <person name="Albert T.J."/>
            <person name="Weinstock G.M."/>
        </authorList>
    </citation>
    <scope>NUCLEOTIDE SEQUENCE [LARGE SCALE GENOMIC DNA]</scope>
    <source>
        <strain>SS14</strain>
    </source>
</reference>
<accession>B2S3Y4</accession>
<organism>
    <name type="scientific">Treponema pallidum subsp. pallidum (strain SS14)</name>
    <dbReference type="NCBI Taxonomy" id="455434"/>
    <lineage>
        <taxon>Bacteria</taxon>
        <taxon>Pseudomonadati</taxon>
        <taxon>Spirochaetota</taxon>
        <taxon>Spirochaetia</taxon>
        <taxon>Spirochaetales</taxon>
        <taxon>Treponemataceae</taxon>
        <taxon>Treponema</taxon>
    </lineage>
</organism>
<keyword id="KW-0687">Ribonucleoprotein</keyword>
<keyword id="KW-0689">Ribosomal protein</keyword>
<keyword id="KW-0694">RNA-binding</keyword>
<keyword id="KW-0699">rRNA-binding</keyword>
<evidence type="ECO:0000255" key="1">
    <source>
        <dbReference type="HAMAP-Rule" id="MF_01363"/>
    </source>
</evidence>
<evidence type="ECO:0000305" key="2"/>
<name>RL21_TREPS</name>
<gene>
    <name evidence="1" type="primary">rplU</name>
    <name type="ordered locus">TPASS_0745</name>
</gene>
<dbReference type="EMBL" id="CP000805">
    <property type="protein sequence ID" value="ACD71163.1"/>
    <property type="molecule type" value="Genomic_DNA"/>
</dbReference>
<dbReference type="RefSeq" id="WP_010882190.1">
    <property type="nucleotide sequence ID" value="NC_021508.1"/>
</dbReference>
<dbReference type="SMR" id="B2S3Y4"/>
<dbReference type="GeneID" id="93876513"/>
<dbReference type="KEGG" id="tpp:TPASS_0745"/>
<dbReference type="PATRIC" id="fig|455434.6.peg.735"/>
<dbReference type="Proteomes" id="UP000001202">
    <property type="component" value="Chromosome"/>
</dbReference>
<dbReference type="GO" id="GO:0005737">
    <property type="term" value="C:cytoplasm"/>
    <property type="evidence" value="ECO:0007669"/>
    <property type="project" value="UniProtKB-ARBA"/>
</dbReference>
<dbReference type="GO" id="GO:1990904">
    <property type="term" value="C:ribonucleoprotein complex"/>
    <property type="evidence" value="ECO:0007669"/>
    <property type="project" value="UniProtKB-KW"/>
</dbReference>
<dbReference type="GO" id="GO:0005840">
    <property type="term" value="C:ribosome"/>
    <property type="evidence" value="ECO:0007669"/>
    <property type="project" value="UniProtKB-KW"/>
</dbReference>
<dbReference type="GO" id="GO:0019843">
    <property type="term" value="F:rRNA binding"/>
    <property type="evidence" value="ECO:0007669"/>
    <property type="project" value="UniProtKB-UniRule"/>
</dbReference>
<dbReference type="GO" id="GO:0003735">
    <property type="term" value="F:structural constituent of ribosome"/>
    <property type="evidence" value="ECO:0007669"/>
    <property type="project" value="InterPro"/>
</dbReference>
<dbReference type="GO" id="GO:0006412">
    <property type="term" value="P:translation"/>
    <property type="evidence" value="ECO:0007669"/>
    <property type="project" value="UniProtKB-UniRule"/>
</dbReference>
<dbReference type="HAMAP" id="MF_01363">
    <property type="entry name" value="Ribosomal_bL21"/>
    <property type="match status" value="1"/>
</dbReference>
<dbReference type="InterPro" id="IPR028909">
    <property type="entry name" value="bL21-like"/>
</dbReference>
<dbReference type="InterPro" id="IPR036164">
    <property type="entry name" value="bL21-like_sf"/>
</dbReference>
<dbReference type="InterPro" id="IPR001787">
    <property type="entry name" value="Ribosomal_bL21"/>
</dbReference>
<dbReference type="InterPro" id="IPR018258">
    <property type="entry name" value="Ribosomal_bL21_CS"/>
</dbReference>
<dbReference type="NCBIfam" id="TIGR00061">
    <property type="entry name" value="L21"/>
    <property type="match status" value="1"/>
</dbReference>
<dbReference type="PANTHER" id="PTHR21349">
    <property type="entry name" value="50S RIBOSOMAL PROTEIN L21"/>
    <property type="match status" value="1"/>
</dbReference>
<dbReference type="PANTHER" id="PTHR21349:SF0">
    <property type="entry name" value="LARGE RIBOSOMAL SUBUNIT PROTEIN BL21M"/>
    <property type="match status" value="1"/>
</dbReference>
<dbReference type="Pfam" id="PF00829">
    <property type="entry name" value="Ribosomal_L21p"/>
    <property type="match status" value="1"/>
</dbReference>
<dbReference type="SUPFAM" id="SSF141091">
    <property type="entry name" value="L21p-like"/>
    <property type="match status" value="1"/>
</dbReference>
<dbReference type="PROSITE" id="PS01169">
    <property type="entry name" value="RIBOSOMAL_L21"/>
    <property type="match status" value="1"/>
</dbReference>
<comment type="function">
    <text evidence="1">This protein binds to 23S rRNA in the presence of protein L20.</text>
</comment>
<comment type="subunit">
    <text evidence="1">Part of the 50S ribosomal subunit. Contacts protein L20.</text>
</comment>
<comment type="similarity">
    <text evidence="1">Belongs to the bacterial ribosomal protein bL21 family.</text>
</comment>
<feature type="chain" id="PRO_1000143866" description="Large ribosomal subunit protein bL21">
    <location>
        <begin position="1"/>
        <end position="105"/>
    </location>
</feature>